<feature type="chain" id="PRO_1000008303" description="Translation initiation factor IF-2">
    <location>
        <begin position="1"/>
        <end position="840"/>
    </location>
</feature>
<feature type="domain" description="tr-type G">
    <location>
        <begin position="340"/>
        <end position="509"/>
    </location>
</feature>
<feature type="region of interest" description="Disordered" evidence="3">
    <location>
        <begin position="94"/>
        <end position="157"/>
    </location>
</feature>
<feature type="region of interest" description="Disordered" evidence="3">
    <location>
        <begin position="169"/>
        <end position="256"/>
    </location>
</feature>
<feature type="region of interest" description="G1" evidence="1">
    <location>
        <begin position="349"/>
        <end position="356"/>
    </location>
</feature>
<feature type="region of interest" description="G2" evidence="1">
    <location>
        <begin position="374"/>
        <end position="378"/>
    </location>
</feature>
<feature type="region of interest" description="G3" evidence="1">
    <location>
        <begin position="395"/>
        <end position="398"/>
    </location>
</feature>
<feature type="region of interest" description="G4" evidence="1">
    <location>
        <begin position="449"/>
        <end position="452"/>
    </location>
</feature>
<feature type="region of interest" description="G5" evidence="1">
    <location>
        <begin position="485"/>
        <end position="487"/>
    </location>
</feature>
<feature type="compositionally biased region" description="Basic and acidic residues" evidence="3">
    <location>
        <begin position="95"/>
        <end position="143"/>
    </location>
</feature>
<feature type="compositionally biased region" description="Low complexity" evidence="3">
    <location>
        <begin position="144"/>
        <end position="157"/>
    </location>
</feature>
<feature type="compositionally biased region" description="Basic and acidic residues" evidence="3">
    <location>
        <begin position="175"/>
        <end position="191"/>
    </location>
</feature>
<feature type="compositionally biased region" description="Basic and acidic residues" evidence="3">
    <location>
        <begin position="223"/>
        <end position="232"/>
    </location>
</feature>
<feature type="compositionally biased region" description="Basic residues" evidence="3">
    <location>
        <begin position="233"/>
        <end position="247"/>
    </location>
</feature>
<feature type="binding site" evidence="2">
    <location>
        <begin position="349"/>
        <end position="356"/>
    </location>
    <ligand>
        <name>GTP</name>
        <dbReference type="ChEBI" id="CHEBI:37565"/>
    </ligand>
</feature>
<feature type="binding site" evidence="2">
    <location>
        <begin position="395"/>
        <end position="399"/>
    </location>
    <ligand>
        <name>GTP</name>
        <dbReference type="ChEBI" id="CHEBI:37565"/>
    </ligand>
</feature>
<feature type="binding site" evidence="2">
    <location>
        <begin position="449"/>
        <end position="452"/>
    </location>
    <ligand>
        <name>GTP</name>
        <dbReference type="ChEBI" id="CHEBI:37565"/>
    </ligand>
</feature>
<name>IF2_PSEAB</name>
<reference key="1">
    <citation type="journal article" date="2006" name="Genome Biol.">
        <title>Genomic analysis reveals that Pseudomonas aeruginosa virulence is combinatorial.</title>
        <authorList>
            <person name="Lee D.G."/>
            <person name="Urbach J.M."/>
            <person name="Wu G."/>
            <person name="Liberati N.T."/>
            <person name="Feinbaum R.L."/>
            <person name="Miyata S."/>
            <person name="Diggins L.T."/>
            <person name="He J."/>
            <person name="Saucier M."/>
            <person name="Deziel E."/>
            <person name="Friedman L."/>
            <person name="Li L."/>
            <person name="Grills G."/>
            <person name="Montgomery K."/>
            <person name="Kucherlapati R."/>
            <person name="Rahme L.G."/>
            <person name="Ausubel F.M."/>
        </authorList>
    </citation>
    <scope>NUCLEOTIDE SEQUENCE [LARGE SCALE GENOMIC DNA]</scope>
    <source>
        <strain>UCBPP-PA14</strain>
    </source>
</reference>
<sequence length="840" mass="90856">MTQVTVKELAQVVDTPVERLLLQMRDAGLPHTSAEQVVTDSEKQALLTHLKGSHGDRASEPRKITLQRKTTTTLKVGGSKTVSVEVRKKKTYVKRSPDEIEAERQRELEEQRAAEEAERLKAEEAAARQRAEEEARKAEEAARAKAAQEAAATAGAEPAVVADVAAAEPVAKPAAVEERKKEEPRRAPKRDEDDDRRDRKHTQHRPSVKEKEKVPAPRVAPRSTDEESDGYRRGGRGGKSKLKKRNQHGFQNPTGPIVREVNIGETITVAELAAQMSVKGAEVVKFMFKMGSPVTINQVLDQETAQLVAEELGHKVKLVSENALEEQLAESLKFEGEAVTRAPVVTVMGHVDHGKTSLLDYIRRAKVAAGEAGGITQHIGAYHVETERGMVTFLDTPGHAAFTAMRARGAQATDIVILVVAADDGVMPQTQEAVQHAKAAGVPIVVAVNKIDKPEANPDNIKNGLAALDVIPEEWGGDAPFVPVSAKLGTGVDELLEAVLLQAEVLELKATPSAPGRGVVVESRLDKGRGPVATVLVQDGTLRQGDMVLVGINYGRVRAMLDENGKPIKEAGPSIPVEILGLDGTPDAGDEMTVVADEKKAREVALFRQGKFREVKLARAHAGKLENIFENMGQEEKKTLNIVLKADVRGSLEALQGSLSGLGNDEVQVRVVGGGVGGITESDANLALASNAVLFGFNVRADAGARKIVEAEGLDMRYYNVIYDIIEDVKKALTGMLGSDLRENILGIAEVRDVFRSPKFGAIAGCMVTEGMVHRNRPIRVLRDDVVIFEGELESLRRFKDDVAEVRAGMECGIGVKSYNDVKVGDKIEVFEKVEVARSL</sequence>
<organism>
    <name type="scientific">Pseudomonas aeruginosa (strain UCBPP-PA14)</name>
    <dbReference type="NCBI Taxonomy" id="208963"/>
    <lineage>
        <taxon>Bacteria</taxon>
        <taxon>Pseudomonadati</taxon>
        <taxon>Pseudomonadota</taxon>
        <taxon>Gammaproteobacteria</taxon>
        <taxon>Pseudomonadales</taxon>
        <taxon>Pseudomonadaceae</taxon>
        <taxon>Pseudomonas</taxon>
    </lineage>
</organism>
<accession>Q02FS8</accession>
<dbReference type="EMBL" id="CP000438">
    <property type="protein sequence ID" value="ABJ14127.1"/>
    <property type="molecule type" value="Genomic_DNA"/>
</dbReference>
<dbReference type="RefSeq" id="WP_003100517.1">
    <property type="nucleotide sequence ID" value="NZ_CP034244.1"/>
</dbReference>
<dbReference type="SMR" id="Q02FS8"/>
<dbReference type="KEGG" id="pau:PA14_62760"/>
<dbReference type="PseudoCAP" id="PA14_62760"/>
<dbReference type="HOGENOM" id="CLU_006301_6_1_6"/>
<dbReference type="BioCyc" id="PAER208963:G1G74-5307-MONOMER"/>
<dbReference type="Proteomes" id="UP000000653">
    <property type="component" value="Chromosome"/>
</dbReference>
<dbReference type="GO" id="GO:0005829">
    <property type="term" value="C:cytosol"/>
    <property type="evidence" value="ECO:0007669"/>
    <property type="project" value="TreeGrafter"/>
</dbReference>
<dbReference type="GO" id="GO:0005525">
    <property type="term" value="F:GTP binding"/>
    <property type="evidence" value="ECO:0007669"/>
    <property type="project" value="UniProtKB-KW"/>
</dbReference>
<dbReference type="GO" id="GO:0003924">
    <property type="term" value="F:GTPase activity"/>
    <property type="evidence" value="ECO:0007669"/>
    <property type="project" value="UniProtKB-UniRule"/>
</dbReference>
<dbReference type="GO" id="GO:0003743">
    <property type="term" value="F:translation initiation factor activity"/>
    <property type="evidence" value="ECO:0007669"/>
    <property type="project" value="UniProtKB-UniRule"/>
</dbReference>
<dbReference type="CDD" id="cd01887">
    <property type="entry name" value="IF2_eIF5B"/>
    <property type="match status" value="1"/>
</dbReference>
<dbReference type="CDD" id="cd03702">
    <property type="entry name" value="IF2_mtIF2_II"/>
    <property type="match status" value="1"/>
</dbReference>
<dbReference type="CDD" id="cd03692">
    <property type="entry name" value="mtIF2_IVc"/>
    <property type="match status" value="1"/>
</dbReference>
<dbReference type="FunFam" id="2.40.30.10:FF:000007">
    <property type="entry name" value="Translation initiation factor IF-2"/>
    <property type="match status" value="1"/>
</dbReference>
<dbReference type="FunFam" id="2.40.30.10:FF:000008">
    <property type="entry name" value="Translation initiation factor IF-2"/>
    <property type="match status" value="1"/>
</dbReference>
<dbReference type="FunFam" id="3.40.50.10050:FF:000001">
    <property type="entry name" value="Translation initiation factor IF-2"/>
    <property type="match status" value="1"/>
</dbReference>
<dbReference type="FunFam" id="3.40.50.300:FF:000019">
    <property type="entry name" value="Translation initiation factor IF-2"/>
    <property type="match status" value="1"/>
</dbReference>
<dbReference type="Gene3D" id="3.40.50.300">
    <property type="entry name" value="P-loop containing nucleotide triphosphate hydrolases"/>
    <property type="match status" value="1"/>
</dbReference>
<dbReference type="Gene3D" id="3.30.56.50">
    <property type="entry name" value="Putative DNA-binding domain, N-terminal subdomain of bacterial translation initiation factor IF2"/>
    <property type="match status" value="1"/>
</dbReference>
<dbReference type="Gene3D" id="2.40.30.10">
    <property type="entry name" value="Translation factors"/>
    <property type="match status" value="2"/>
</dbReference>
<dbReference type="Gene3D" id="3.40.50.10050">
    <property type="entry name" value="Translation initiation factor IF- 2, domain 3"/>
    <property type="match status" value="1"/>
</dbReference>
<dbReference type="HAMAP" id="MF_00100_B">
    <property type="entry name" value="IF_2_B"/>
    <property type="match status" value="1"/>
</dbReference>
<dbReference type="InterPro" id="IPR009061">
    <property type="entry name" value="DNA-bd_dom_put_sf"/>
</dbReference>
<dbReference type="InterPro" id="IPR053905">
    <property type="entry name" value="EF-G-like_DII"/>
</dbReference>
<dbReference type="InterPro" id="IPR013575">
    <property type="entry name" value="IF2_assoc_dom_bac"/>
</dbReference>
<dbReference type="InterPro" id="IPR044145">
    <property type="entry name" value="IF2_II"/>
</dbReference>
<dbReference type="InterPro" id="IPR006847">
    <property type="entry name" value="IF2_N"/>
</dbReference>
<dbReference type="InterPro" id="IPR027417">
    <property type="entry name" value="P-loop_NTPase"/>
</dbReference>
<dbReference type="InterPro" id="IPR005225">
    <property type="entry name" value="Small_GTP-bd"/>
</dbReference>
<dbReference type="InterPro" id="IPR000795">
    <property type="entry name" value="T_Tr_GTP-bd_dom"/>
</dbReference>
<dbReference type="InterPro" id="IPR000178">
    <property type="entry name" value="TF_IF2_bacterial-like"/>
</dbReference>
<dbReference type="InterPro" id="IPR015760">
    <property type="entry name" value="TIF_IF2"/>
</dbReference>
<dbReference type="InterPro" id="IPR023115">
    <property type="entry name" value="TIF_IF2_dom3"/>
</dbReference>
<dbReference type="InterPro" id="IPR036925">
    <property type="entry name" value="TIF_IF2_dom3_sf"/>
</dbReference>
<dbReference type="InterPro" id="IPR009000">
    <property type="entry name" value="Transl_B-barrel_sf"/>
</dbReference>
<dbReference type="NCBIfam" id="TIGR00487">
    <property type="entry name" value="IF-2"/>
    <property type="match status" value="1"/>
</dbReference>
<dbReference type="NCBIfam" id="TIGR00231">
    <property type="entry name" value="small_GTP"/>
    <property type="match status" value="1"/>
</dbReference>
<dbReference type="PANTHER" id="PTHR43381:SF5">
    <property type="entry name" value="TR-TYPE G DOMAIN-CONTAINING PROTEIN"/>
    <property type="match status" value="1"/>
</dbReference>
<dbReference type="PANTHER" id="PTHR43381">
    <property type="entry name" value="TRANSLATION INITIATION FACTOR IF-2-RELATED"/>
    <property type="match status" value="1"/>
</dbReference>
<dbReference type="Pfam" id="PF22042">
    <property type="entry name" value="EF-G_D2"/>
    <property type="match status" value="1"/>
</dbReference>
<dbReference type="Pfam" id="PF00009">
    <property type="entry name" value="GTP_EFTU"/>
    <property type="match status" value="1"/>
</dbReference>
<dbReference type="Pfam" id="PF11987">
    <property type="entry name" value="IF-2"/>
    <property type="match status" value="1"/>
</dbReference>
<dbReference type="Pfam" id="PF08364">
    <property type="entry name" value="IF2_assoc"/>
    <property type="match status" value="1"/>
</dbReference>
<dbReference type="Pfam" id="PF04760">
    <property type="entry name" value="IF2_N"/>
    <property type="match status" value="2"/>
</dbReference>
<dbReference type="SUPFAM" id="SSF52156">
    <property type="entry name" value="Initiation factor IF2/eIF5b, domain 3"/>
    <property type="match status" value="1"/>
</dbReference>
<dbReference type="SUPFAM" id="SSF52540">
    <property type="entry name" value="P-loop containing nucleoside triphosphate hydrolases"/>
    <property type="match status" value="1"/>
</dbReference>
<dbReference type="SUPFAM" id="SSF46955">
    <property type="entry name" value="Putative DNA-binding domain"/>
    <property type="match status" value="1"/>
</dbReference>
<dbReference type="SUPFAM" id="SSF50447">
    <property type="entry name" value="Translation proteins"/>
    <property type="match status" value="2"/>
</dbReference>
<dbReference type="PROSITE" id="PS51722">
    <property type="entry name" value="G_TR_2"/>
    <property type="match status" value="1"/>
</dbReference>
<dbReference type="PROSITE" id="PS01176">
    <property type="entry name" value="IF2"/>
    <property type="match status" value="1"/>
</dbReference>
<gene>
    <name evidence="2" type="primary">infB</name>
    <name type="ordered locus">PA14_62760</name>
</gene>
<evidence type="ECO:0000250" key="1"/>
<evidence type="ECO:0000255" key="2">
    <source>
        <dbReference type="HAMAP-Rule" id="MF_00100"/>
    </source>
</evidence>
<evidence type="ECO:0000256" key="3">
    <source>
        <dbReference type="SAM" id="MobiDB-lite"/>
    </source>
</evidence>
<proteinExistence type="inferred from homology"/>
<protein>
    <recommendedName>
        <fullName evidence="2">Translation initiation factor IF-2</fullName>
    </recommendedName>
</protein>
<keyword id="KW-0963">Cytoplasm</keyword>
<keyword id="KW-0342">GTP-binding</keyword>
<keyword id="KW-0396">Initiation factor</keyword>
<keyword id="KW-0547">Nucleotide-binding</keyword>
<keyword id="KW-0648">Protein biosynthesis</keyword>
<comment type="function">
    <text evidence="2">One of the essential components for the initiation of protein synthesis. Protects formylmethionyl-tRNA from spontaneous hydrolysis and promotes its binding to the 30S ribosomal subunits. Also involved in the hydrolysis of GTP during the formation of the 70S ribosomal complex.</text>
</comment>
<comment type="subcellular location">
    <subcellularLocation>
        <location evidence="2">Cytoplasm</location>
    </subcellularLocation>
</comment>
<comment type="similarity">
    <text evidence="2">Belongs to the TRAFAC class translation factor GTPase superfamily. Classic translation factor GTPase family. IF-2 subfamily.</text>
</comment>